<reference key="1">
    <citation type="journal article" date="2005" name="J. Mol. Evol.">
        <title>Explosive lineage-specific expansion of the orphan nuclear receptor HNF4 in nematodes.</title>
        <authorList>
            <person name="Robinson-Rechavi M."/>
            <person name="Maina C.V."/>
            <person name="Gissendanner C.R."/>
            <person name="Laudet V."/>
            <person name="Sluder A."/>
        </authorList>
    </citation>
    <scope>NUCLEOTIDE SEQUENCE [MRNA] (ISOFORM A)</scope>
</reference>
<reference key="2">
    <citation type="journal article" date="1998" name="Science">
        <title>Genome sequence of the nematode C. elegans: a platform for investigating biology.</title>
        <authorList>
            <consortium name="The C. elegans sequencing consortium"/>
        </authorList>
    </citation>
    <scope>NUCLEOTIDE SEQUENCE [LARGE SCALE GENOMIC DNA]</scope>
    <scope>ALTERNATIVE SPLICING</scope>
    <source>
        <strain>Bristol N2</strain>
    </source>
</reference>
<accession>Q21006</accession>
<accession>B3GWB8</accession>
<accession>Q7JM21</accession>
<accession>Q95NU3</accession>
<accession>Q9GTH8</accession>
<feature type="chain" id="PRO_0000053777" description="Nuclear hormone receptor family member nhr-34">
    <location>
        <begin position="1"/>
        <end position="631"/>
    </location>
</feature>
<feature type="domain" description="NR LBD" evidence="2">
    <location>
        <begin position="306"/>
        <end position="581"/>
    </location>
</feature>
<feature type="DNA-binding region" description="Nuclear receptor" evidence="1">
    <location>
        <begin position="148"/>
        <end position="223"/>
    </location>
</feature>
<feature type="zinc finger region" description="NR C4-type" evidence="1">
    <location>
        <begin position="151"/>
        <end position="171"/>
    </location>
</feature>
<feature type="zinc finger region" description="NR C4-type" evidence="1">
    <location>
        <begin position="187"/>
        <end position="206"/>
    </location>
</feature>
<feature type="region of interest" description="Disordered" evidence="3">
    <location>
        <begin position="29"/>
        <end position="65"/>
    </location>
</feature>
<feature type="region of interest" description="Disordered" evidence="3">
    <location>
        <begin position="222"/>
        <end position="266"/>
    </location>
</feature>
<feature type="region of interest" description="Disordered" evidence="3">
    <location>
        <begin position="582"/>
        <end position="631"/>
    </location>
</feature>
<feature type="compositionally biased region" description="Polar residues" evidence="3">
    <location>
        <begin position="33"/>
        <end position="51"/>
    </location>
</feature>
<feature type="compositionally biased region" description="Basic and acidic residues" evidence="3">
    <location>
        <begin position="222"/>
        <end position="236"/>
    </location>
</feature>
<feature type="compositionally biased region" description="Low complexity" evidence="3">
    <location>
        <begin position="246"/>
        <end position="266"/>
    </location>
</feature>
<feature type="compositionally biased region" description="Polar residues" evidence="3">
    <location>
        <begin position="596"/>
        <end position="623"/>
    </location>
</feature>
<feature type="splice variant" id="VSP_053631" description="In isoform d." evidence="5">
    <location>
        <begin position="1"/>
        <end position="68"/>
    </location>
</feature>
<feature type="splice variant" id="VSP_020155" description="In isoform b." evidence="5">
    <original>MTDYCIFNISWMSDRFGCETGNEDVQECIDKS</original>
    <variation>MDDLHQQLHQNYN</variation>
    <location>
        <begin position="1"/>
        <end position="32"/>
    </location>
</feature>
<feature type="splice variant" id="VSP_003725" description="In isoform a." evidence="4">
    <original>MTDYCIFNISWM</original>
    <variation>MAESKFSILKGE</variation>
    <location>
        <begin position="1"/>
        <end position="12"/>
    </location>
</feature>
<feature type="splice variant" id="VSP_020156" description="In isoform a." evidence="4">
    <location>
        <begin position="13"/>
        <end position="144"/>
    </location>
</feature>
<sequence>MTDYCIFNISWMSDRFGCETGNEDVQECIDKSPNGSPTTSTTHRRQNSSSGLEPARKRPKLSPPVLTAMPLDLTDAVSPNESQACTSSLKGVVTAAGAAQMSVADRMTSSSVAPPLCIVPRSVEFINPKTEDMSMDIPMGNVQSEFTGLKCRVCGDSRAGRHYGTIACNGCKGFFRRSIWEQRDYVCRFGGKCLVVQEYRNRCRACRLRKCFTVGMDARAVQSERDKHKKNPKDSNNEGSTSPQYPTASTPISIPSTSTSQTPTSSVNSYNFQNIPGIVSRSFSENLIMRDNSVPVMETSQSAALSHVPLVRYLIDLEKATDNLIDENCDFMSMEFDQLCRVDVTIEAAFRQPGVVAKRTPPRWLALERLTTLEDVHIAWCRSFVLCIDYAKIMKDYQELSPTDQFTLLRNRVISVNWLCHTYKTFKAGCDGVALVNGSWYPRDKELQKQLDPGCNHYFRILSEHLMEDLVIPMREMDMDEGEFVILKALILFRAHRRLSEEGRAHIKRVRDKYIEALYQHVQHQHRHFSSVQTSMRISKILLLLPSIEHLSQQEDDNVQFLALFNLANLNGLPYELHSSIKQHIPNGDDSDDTQVNEVTSNNDGPRSSESSHTPQSVSTSQFLEFKPSLH</sequence>
<organism>
    <name type="scientific">Caenorhabditis elegans</name>
    <dbReference type="NCBI Taxonomy" id="6239"/>
    <lineage>
        <taxon>Eukaryota</taxon>
        <taxon>Metazoa</taxon>
        <taxon>Ecdysozoa</taxon>
        <taxon>Nematoda</taxon>
        <taxon>Chromadorea</taxon>
        <taxon>Rhabditida</taxon>
        <taxon>Rhabditina</taxon>
        <taxon>Rhabditomorpha</taxon>
        <taxon>Rhabditoidea</taxon>
        <taxon>Rhabditidae</taxon>
        <taxon>Peloderinae</taxon>
        <taxon>Caenorhabditis</taxon>
    </lineage>
</organism>
<keyword id="KW-0025">Alternative splicing</keyword>
<keyword id="KW-0238">DNA-binding</keyword>
<keyword id="KW-0479">Metal-binding</keyword>
<keyword id="KW-0539">Nucleus</keyword>
<keyword id="KW-0675">Receptor</keyword>
<keyword id="KW-1185">Reference proteome</keyword>
<keyword id="KW-0804">Transcription</keyword>
<keyword id="KW-0805">Transcription regulation</keyword>
<keyword id="KW-0862">Zinc</keyword>
<keyword id="KW-0863">Zinc-finger</keyword>
<gene>
    <name type="primary">nhr-34</name>
    <name type="ORF">F58G6.5</name>
</gene>
<comment type="function">
    <text>Orphan nuclear receptor.</text>
</comment>
<comment type="subcellular location">
    <subcellularLocation>
        <location evidence="1">Nucleus</location>
    </subcellularLocation>
</comment>
<comment type="alternative products">
    <event type="alternative splicing"/>
    <isoform>
        <id>Q21006-3</id>
        <name>c</name>
        <sequence type="displayed"/>
    </isoform>
    <isoform>
        <id>Q21006-2</id>
        <name>a</name>
        <sequence type="described" ref="VSP_003725 VSP_020156"/>
    </isoform>
    <isoform>
        <id>Q21006-1</id>
        <name>b</name>
        <sequence type="described" ref="VSP_020155"/>
    </isoform>
    <isoform>
        <id>Q21006-4</id>
        <name>d</name>
        <sequence type="described" ref="VSP_053631"/>
    </isoform>
</comment>
<comment type="similarity">
    <text evidence="5">Belongs to the nuclear hormone receptor family.</text>
</comment>
<comment type="sequence caution" evidence="5">
    <conflict type="erroneous initiation">
        <sequence resource="EMBL-CDS" id="AAG15129"/>
    </conflict>
</comment>
<dbReference type="EMBL" id="AF273780">
    <property type="protein sequence ID" value="AAG15129.1"/>
    <property type="status" value="ALT_INIT"/>
    <property type="molecule type" value="mRNA"/>
</dbReference>
<dbReference type="EMBL" id="Z68217">
    <property type="protein sequence ID" value="CAA92467.2"/>
    <property type="molecule type" value="Genomic_DNA"/>
</dbReference>
<dbReference type="EMBL" id="Z68217">
    <property type="protein sequence ID" value="CAC70099.2"/>
    <property type="molecule type" value="Genomic_DNA"/>
</dbReference>
<dbReference type="EMBL" id="Z68217">
    <property type="protein sequence ID" value="CAE46673.1"/>
    <property type="molecule type" value="Genomic_DNA"/>
</dbReference>
<dbReference type="EMBL" id="Z68222">
    <property type="protein sequence ID" value="CAE46673.1"/>
    <property type="status" value="JOINED"/>
    <property type="molecule type" value="Genomic_DNA"/>
</dbReference>
<dbReference type="EMBL" id="Z68217">
    <property type="protein sequence ID" value="CAQ58113.1"/>
    <property type="molecule type" value="Genomic_DNA"/>
</dbReference>
<dbReference type="PIR" id="T22948">
    <property type="entry name" value="T22948"/>
</dbReference>
<dbReference type="RefSeq" id="NP_001023245.1">
    <molecule id="Q21006-3"/>
    <property type="nucleotide sequence ID" value="NM_001028074.5"/>
</dbReference>
<dbReference type="RefSeq" id="NP_001129859.1">
    <molecule id="Q21006-4"/>
    <property type="nucleotide sequence ID" value="NM_001136387.4"/>
</dbReference>
<dbReference type="RefSeq" id="NP_501716.2">
    <property type="nucleotide sequence ID" value="NM_069315.4"/>
</dbReference>
<dbReference type="RefSeq" id="NP_741480.1">
    <molecule id="Q21006-2"/>
    <property type="nucleotide sequence ID" value="NM_171412.5"/>
</dbReference>
<dbReference type="BioGRID" id="42905">
    <property type="interactions" value="6"/>
</dbReference>
<dbReference type="IntAct" id="Q21006">
    <property type="interactions" value="1"/>
</dbReference>
<dbReference type="STRING" id="6239.F58G6.5c.1"/>
<dbReference type="iPTMnet" id="Q21006"/>
<dbReference type="PaxDb" id="6239-F58G6.5c"/>
<dbReference type="PeptideAtlas" id="Q21006"/>
<dbReference type="EnsemblMetazoa" id="F58G6.5a.1">
    <molecule id="Q21006-2"/>
    <property type="protein sequence ID" value="F58G6.5a.1"/>
    <property type="gene ID" value="WBGene00003627"/>
</dbReference>
<dbReference type="EnsemblMetazoa" id="F58G6.5b.1">
    <property type="protein sequence ID" value="F58G6.5b.1"/>
    <property type="gene ID" value="WBGene00003627"/>
</dbReference>
<dbReference type="EnsemblMetazoa" id="F58G6.5c.1">
    <molecule id="Q21006-3"/>
    <property type="protein sequence ID" value="F58G6.5c.1"/>
    <property type="gene ID" value="WBGene00003627"/>
</dbReference>
<dbReference type="EnsemblMetazoa" id="F58G6.5c.2">
    <molecule id="Q21006-3"/>
    <property type="protein sequence ID" value="F58G6.5c.2"/>
    <property type="gene ID" value="WBGene00003627"/>
</dbReference>
<dbReference type="EnsemblMetazoa" id="F58G6.5d.1">
    <molecule id="Q21006-4"/>
    <property type="protein sequence ID" value="F58G6.5d.1"/>
    <property type="gene ID" value="WBGene00003627"/>
</dbReference>
<dbReference type="GeneID" id="177800"/>
<dbReference type="KEGG" id="cel:CELE_F58G6.5"/>
<dbReference type="UCSC" id="F58G6.5a">
    <molecule id="Q21006-1"/>
    <property type="organism name" value="c. elegans"/>
</dbReference>
<dbReference type="AGR" id="WB:WBGene00003627"/>
<dbReference type="CTD" id="177800"/>
<dbReference type="WormBase" id="F58G6.5a">
    <molecule id="Q21006-2"/>
    <property type="protein sequence ID" value="CE27764"/>
    <property type="gene ID" value="WBGene00003627"/>
    <property type="gene designation" value="nhr-34"/>
</dbReference>
<dbReference type="WormBase" id="F58G6.5b">
    <property type="protein sequence ID" value="CE35564"/>
    <property type="gene ID" value="WBGene00003627"/>
    <property type="gene designation" value="nhr-34"/>
</dbReference>
<dbReference type="WormBase" id="F58G6.5c">
    <molecule id="Q21006-3"/>
    <property type="protein sequence ID" value="CE35565"/>
    <property type="gene ID" value="WBGene00003627"/>
    <property type="gene designation" value="nhr-34"/>
</dbReference>
<dbReference type="WormBase" id="F58G6.5d">
    <molecule id="Q21006-4"/>
    <property type="protein sequence ID" value="CE42612"/>
    <property type="gene ID" value="WBGene00003627"/>
    <property type="gene designation" value="nhr-34"/>
</dbReference>
<dbReference type="eggNOG" id="KOG3575">
    <property type="taxonomic scope" value="Eukaryota"/>
</dbReference>
<dbReference type="InParanoid" id="Q21006"/>
<dbReference type="OMA" id="SEHLMQD"/>
<dbReference type="OrthoDB" id="5798272at2759"/>
<dbReference type="PhylomeDB" id="Q21006"/>
<dbReference type="PRO" id="PR:Q21006"/>
<dbReference type="Proteomes" id="UP000001940">
    <property type="component" value="Chromosome IV"/>
</dbReference>
<dbReference type="Bgee" id="WBGene00003627">
    <property type="expression patterns" value="Expressed in larva and 3 other cell types or tissues"/>
</dbReference>
<dbReference type="GO" id="GO:0005634">
    <property type="term" value="C:nucleus"/>
    <property type="evidence" value="ECO:0007669"/>
    <property type="project" value="UniProtKB-SubCell"/>
</dbReference>
<dbReference type="GO" id="GO:0003700">
    <property type="term" value="F:DNA-binding transcription factor activity"/>
    <property type="evidence" value="ECO:0007669"/>
    <property type="project" value="InterPro"/>
</dbReference>
<dbReference type="GO" id="GO:0000978">
    <property type="term" value="F:RNA polymerase II cis-regulatory region sequence-specific DNA binding"/>
    <property type="evidence" value="ECO:0007669"/>
    <property type="project" value="InterPro"/>
</dbReference>
<dbReference type="GO" id="GO:0008270">
    <property type="term" value="F:zinc ion binding"/>
    <property type="evidence" value="ECO:0007669"/>
    <property type="project" value="UniProtKB-KW"/>
</dbReference>
<dbReference type="GO" id="GO:0006355">
    <property type="term" value="P:regulation of DNA-templated transcription"/>
    <property type="evidence" value="ECO:0000318"/>
    <property type="project" value="GO_Central"/>
</dbReference>
<dbReference type="CDD" id="cd06960">
    <property type="entry name" value="NR_DBD_HNF4A"/>
    <property type="match status" value="1"/>
</dbReference>
<dbReference type="CDD" id="cd06157">
    <property type="entry name" value="NR_LBD"/>
    <property type="match status" value="1"/>
</dbReference>
<dbReference type="FunFam" id="1.10.565.10:FF:000045">
    <property type="entry name" value="Nuclear Hormone Receptor family"/>
    <property type="match status" value="1"/>
</dbReference>
<dbReference type="FunFam" id="3.30.50.10:FF:000030">
    <property type="entry name" value="Nuclear Hormone Receptor family"/>
    <property type="match status" value="1"/>
</dbReference>
<dbReference type="Gene3D" id="3.30.50.10">
    <property type="entry name" value="Erythroid Transcription Factor GATA-1, subunit A"/>
    <property type="match status" value="1"/>
</dbReference>
<dbReference type="Gene3D" id="1.10.565.10">
    <property type="entry name" value="Retinoid X Receptor"/>
    <property type="match status" value="1"/>
</dbReference>
<dbReference type="InterPro" id="IPR052499">
    <property type="entry name" value="C.elegans_NHRs"/>
</dbReference>
<dbReference type="InterPro" id="IPR049636">
    <property type="entry name" value="HNF4-like_DBD"/>
</dbReference>
<dbReference type="InterPro" id="IPR035500">
    <property type="entry name" value="NHR-like_dom_sf"/>
</dbReference>
<dbReference type="InterPro" id="IPR000536">
    <property type="entry name" value="Nucl_hrmn_rcpt_lig-bd"/>
</dbReference>
<dbReference type="InterPro" id="IPR001723">
    <property type="entry name" value="Nuclear_hrmn_rcpt"/>
</dbReference>
<dbReference type="InterPro" id="IPR001628">
    <property type="entry name" value="Znf_hrmn_rcpt"/>
</dbReference>
<dbReference type="InterPro" id="IPR013088">
    <property type="entry name" value="Znf_NHR/GATA"/>
</dbReference>
<dbReference type="PANTHER" id="PTHR47630:SF8">
    <property type="entry name" value="NUCLEAR HORMONE RECEPTOR FAMILY MEMBER NHR-34"/>
    <property type="match status" value="1"/>
</dbReference>
<dbReference type="PANTHER" id="PTHR47630">
    <property type="entry name" value="NUCLEAR HORMONE RECEPTOR FAMILY-RELATED-RELATED"/>
    <property type="match status" value="1"/>
</dbReference>
<dbReference type="Pfam" id="PF00104">
    <property type="entry name" value="Hormone_recep"/>
    <property type="match status" value="1"/>
</dbReference>
<dbReference type="Pfam" id="PF00105">
    <property type="entry name" value="zf-C4"/>
    <property type="match status" value="1"/>
</dbReference>
<dbReference type="PRINTS" id="PR00398">
    <property type="entry name" value="STRDHORMONER"/>
</dbReference>
<dbReference type="PRINTS" id="PR00047">
    <property type="entry name" value="STROIDFINGER"/>
</dbReference>
<dbReference type="SMART" id="SM00430">
    <property type="entry name" value="HOLI"/>
    <property type="match status" value="1"/>
</dbReference>
<dbReference type="SMART" id="SM00399">
    <property type="entry name" value="ZnF_C4"/>
    <property type="match status" value="1"/>
</dbReference>
<dbReference type="SUPFAM" id="SSF57716">
    <property type="entry name" value="Glucocorticoid receptor-like (DNA-binding domain)"/>
    <property type="match status" value="1"/>
</dbReference>
<dbReference type="SUPFAM" id="SSF48508">
    <property type="entry name" value="Nuclear receptor ligand-binding domain"/>
    <property type="match status" value="1"/>
</dbReference>
<dbReference type="PROSITE" id="PS51843">
    <property type="entry name" value="NR_LBD"/>
    <property type="match status" value="1"/>
</dbReference>
<dbReference type="PROSITE" id="PS00031">
    <property type="entry name" value="NUCLEAR_REC_DBD_1"/>
    <property type="match status" value="1"/>
</dbReference>
<dbReference type="PROSITE" id="PS51030">
    <property type="entry name" value="NUCLEAR_REC_DBD_2"/>
    <property type="match status" value="1"/>
</dbReference>
<protein>
    <recommendedName>
        <fullName>Nuclear hormone receptor family member nhr-34</fullName>
    </recommendedName>
</protein>
<evidence type="ECO:0000255" key="1">
    <source>
        <dbReference type="PROSITE-ProRule" id="PRU00407"/>
    </source>
</evidence>
<evidence type="ECO:0000255" key="2">
    <source>
        <dbReference type="PROSITE-ProRule" id="PRU01189"/>
    </source>
</evidence>
<evidence type="ECO:0000256" key="3">
    <source>
        <dbReference type="SAM" id="MobiDB-lite"/>
    </source>
</evidence>
<evidence type="ECO:0000303" key="4">
    <source>
    </source>
</evidence>
<evidence type="ECO:0000305" key="5"/>
<name>NHR34_CAEEL</name>
<proteinExistence type="evidence at transcript level"/>